<reference key="1">
    <citation type="journal article" date="2009" name="BMC Genomics">
        <title>Evidence for niche adaptation in the genome of the bovine pathogen Streptococcus uberis.</title>
        <authorList>
            <person name="Ward P.N."/>
            <person name="Holden M.T.G."/>
            <person name="Leigh J.A."/>
            <person name="Lennard N."/>
            <person name="Bignell A."/>
            <person name="Barron A."/>
            <person name="Clark L."/>
            <person name="Quail M.A."/>
            <person name="Woodward J."/>
            <person name="Barrell B.G."/>
            <person name="Egan S.A."/>
            <person name="Field T.R."/>
            <person name="Maskell D."/>
            <person name="Kehoe M."/>
            <person name="Dowson C.G."/>
            <person name="Chanter N."/>
            <person name="Whatmore A.M."/>
            <person name="Bentley S.D."/>
            <person name="Parkhill J."/>
        </authorList>
    </citation>
    <scope>NUCLEOTIDE SEQUENCE [LARGE SCALE GENOMIC DNA]</scope>
    <source>
        <strain>ATCC BAA-854 / 0140J</strain>
    </source>
</reference>
<feature type="chain" id="PRO_1000199836" description="Ribosomal RNA large subunit methyltransferase H">
    <location>
        <begin position="1"/>
        <end position="159"/>
    </location>
</feature>
<feature type="binding site" evidence="1">
    <location>
        <position position="76"/>
    </location>
    <ligand>
        <name>S-adenosyl-L-methionine</name>
        <dbReference type="ChEBI" id="CHEBI:59789"/>
    </ligand>
</feature>
<feature type="binding site" evidence="1">
    <location>
        <position position="108"/>
    </location>
    <ligand>
        <name>S-adenosyl-L-methionine</name>
        <dbReference type="ChEBI" id="CHEBI:59789"/>
    </ligand>
</feature>
<feature type="binding site" evidence="1">
    <location>
        <begin position="127"/>
        <end position="132"/>
    </location>
    <ligand>
        <name>S-adenosyl-L-methionine</name>
        <dbReference type="ChEBI" id="CHEBI:59789"/>
    </ligand>
</feature>
<evidence type="ECO:0000255" key="1">
    <source>
        <dbReference type="HAMAP-Rule" id="MF_00658"/>
    </source>
</evidence>
<organism>
    <name type="scientific">Streptococcus uberis (strain ATCC BAA-854 / 0140J)</name>
    <dbReference type="NCBI Taxonomy" id="218495"/>
    <lineage>
        <taxon>Bacteria</taxon>
        <taxon>Bacillati</taxon>
        <taxon>Bacillota</taxon>
        <taxon>Bacilli</taxon>
        <taxon>Lactobacillales</taxon>
        <taxon>Streptococcaceae</taxon>
        <taxon>Streptococcus</taxon>
    </lineage>
</organism>
<keyword id="KW-0963">Cytoplasm</keyword>
<keyword id="KW-0489">Methyltransferase</keyword>
<keyword id="KW-1185">Reference proteome</keyword>
<keyword id="KW-0698">rRNA processing</keyword>
<keyword id="KW-0949">S-adenosyl-L-methionine</keyword>
<keyword id="KW-0808">Transferase</keyword>
<gene>
    <name evidence="1" type="primary">rlmH</name>
    <name type="ordered locus">SUB1867</name>
</gene>
<proteinExistence type="inferred from homology"/>
<sequence>MKIKIICVGKIKEKYLKDGIAEYQKRLSRFTQFEIIELADEKTPEKASQAENEKIMEKEANRILSKIGNRDYVIALAIEGKQYASEEFSQFITDITIQGFSDITFIIGGSLGLHSKIKQKAHALISFGRLTLPHQLMRLVLTEQIYRAFMIQEGSPYHK</sequence>
<protein>
    <recommendedName>
        <fullName evidence="1">Ribosomal RNA large subunit methyltransferase H</fullName>
        <ecNumber evidence="1">2.1.1.177</ecNumber>
    </recommendedName>
    <alternativeName>
        <fullName evidence="1">23S rRNA (pseudouridine1915-N3)-methyltransferase</fullName>
    </alternativeName>
    <alternativeName>
        <fullName evidence="1">23S rRNA m3Psi1915 methyltransferase</fullName>
    </alternativeName>
    <alternativeName>
        <fullName evidence="1">rRNA (pseudouridine-N3-)-methyltransferase RlmH</fullName>
    </alternativeName>
</protein>
<dbReference type="EC" id="2.1.1.177" evidence="1"/>
<dbReference type="EMBL" id="AM946015">
    <property type="protein sequence ID" value="CAR43944.1"/>
    <property type="molecule type" value="Genomic_DNA"/>
</dbReference>
<dbReference type="RefSeq" id="WP_015912152.1">
    <property type="nucleotide sequence ID" value="NC_012004.1"/>
</dbReference>
<dbReference type="SMR" id="B9DWF3"/>
<dbReference type="STRING" id="218495.SUB1867"/>
<dbReference type="KEGG" id="sub:SUB1867"/>
<dbReference type="eggNOG" id="COG1576">
    <property type="taxonomic scope" value="Bacteria"/>
</dbReference>
<dbReference type="HOGENOM" id="CLU_100552_0_0_9"/>
<dbReference type="OrthoDB" id="9806643at2"/>
<dbReference type="Proteomes" id="UP000000449">
    <property type="component" value="Chromosome"/>
</dbReference>
<dbReference type="GO" id="GO:0005737">
    <property type="term" value="C:cytoplasm"/>
    <property type="evidence" value="ECO:0007669"/>
    <property type="project" value="UniProtKB-SubCell"/>
</dbReference>
<dbReference type="GO" id="GO:0070038">
    <property type="term" value="F:rRNA (pseudouridine-N3-)-methyltransferase activity"/>
    <property type="evidence" value="ECO:0007669"/>
    <property type="project" value="UniProtKB-UniRule"/>
</dbReference>
<dbReference type="CDD" id="cd18081">
    <property type="entry name" value="RlmH-like"/>
    <property type="match status" value="1"/>
</dbReference>
<dbReference type="Gene3D" id="3.40.1280.10">
    <property type="match status" value="1"/>
</dbReference>
<dbReference type="HAMAP" id="MF_00658">
    <property type="entry name" value="23SrRNA_methyltr_H"/>
    <property type="match status" value="1"/>
</dbReference>
<dbReference type="InterPro" id="IPR029028">
    <property type="entry name" value="Alpha/beta_knot_MTases"/>
</dbReference>
<dbReference type="InterPro" id="IPR003742">
    <property type="entry name" value="RlmH-like"/>
</dbReference>
<dbReference type="InterPro" id="IPR029026">
    <property type="entry name" value="tRNA_m1G_MTases_N"/>
</dbReference>
<dbReference type="NCBIfam" id="NF000985">
    <property type="entry name" value="PRK00103.1-3"/>
    <property type="match status" value="1"/>
</dbReference>
<dbReference type="NCBIfam" id="TIGR00246">
    <property type="entry name" value="tRNA_RlmH_YbeA"/>
    <property type="match status" value="1"/>
</dbReference>
<dbReference type="PANTHER" id="PTHR33603">
    <property type="entry name" value="METHYLTRANSFERASE"/>
    <property type="match status" value="1"/>
</dbReference>
<dbReference type="PANTHER" id="PTHR33603:SF1">
    <property type="entry name" value="RIBOSOMAL RNA LARGE SUBUNIT METHYLTRANSFERASE H"/>
    <property type="match status" value="1"/>
</dbReference>
<dbReference type="Pfam" id="PF02590">
    <property type="entry name" value="SPOUT_MTase"/>
    <property type="match status" value="1"/>
</dbReference>
<dbReference type="PIRSF" id="PIRSF004505">
    <property type="entry name" value="MT_bac"/>
    <property type="match status" value="1"/>
</dbReference>
<dbReference type="SUPFAM" id="SSF75217">
    <property type="entry name" value="alpha/beta knot"/>
    <property type="match status" value="1"/>
</dbReference>
<name>RLMH_STRU0</name>
<accession>B9DWF3</accession>
<comment type="function">
    <text evidence="1">Specifically methylates the pseudouridine at position 1915 (m3Psi1915) in 23S rRNA.</text>
</comment>
<comment type="catalytic activity">
    <reaction evidence="1">
        <text>pseudouridine(1915) in 23S rRNA + S-adenosyl-L-methionine = N(3)-methylpseudouridine(1915) in 23S rRNA + S-adenosyl-L-homocysteine + H(+)</text>
        <dbReference type="Rhea" id="RHEA:42752"/>
        <dbReference type="Rhea" id="RHEA-COMP:10221"/>
        <dbReference type="Rhea" id="RHEA-COMP:10222"/>
        <dbReference type="ChEBI" id="CHEBI:15378"/>
        <dbReference type="ChEBI" id="CHEBI:57856"/>
        <dbReference type="ChEBI" id="CHEBI:59789"/>
        <dbReference type="ChEBI" id="CHEBI:65314"/>
        <dbReference type="ChEBI" id="CHEBI:74486"/>
        <dbReference type="EC" id="2.1.1.177"/>
    </reaction>
</comment>
<comment type="subunit">
    <text evidence="1">Homodimer.</text>
</comment>
<comment type="subcellular location">
    <subcellularLocation>
        <location evidence="1">Cytoplasm</location>
    </subcellularLocation>
</comment>
<comment type="similarity">
    <text evidence="1">Belongs to the RNA methyltransferase RlmH family.</text>
</comment>